<proteinExistence type="evidence at protein level"/>
<name>CDPKS_ARATH</name>
<protein>
    <recommendedName>
        <fullName evidence="11">Calcium-dependent protein kinase 28</fullName>
        <ecNumber evidence="9">2.7.11.1</ecNumber>
    </recommendedName>
</protein>
<reference key="1">
    <citation type="journal article" date="1998" name="DNA Res.">
        <title>Structural analysis of Arabidopsis thaliana chromosome 5. V. Sequence features of the regions of 1,381,565 bp covered by twenty one physically assigned P1 and TAC clones.</title>
        <authorList>
            <person name="Kaneko T."/>
            <person name="Kotani H."/>
            <person name="Nakamura Y."/>
            <person name="Sato S."/>
            <person name="Asamizu E."/>
            <person name="Miyajima N."/>
            <person name="Tabata S."/>
        </authorList>
    </citation>
    <scope>NUCLEOTIDE SEQUENCE [LARGE SCALE GENOMIC DNA]</scope>
    <source>
        <strain>cv. Columbia</strain>
    </source>
</reference>
<reference key="2">
    <citation type="journal article" date="2017" name="Plant J.">
        <title>Araport11: a complete reannotation of the Arabidopsis thaliana reference genome.</title>
        <authorList>
            <person name="Cheng C.Y."/>
            <person name="Krishnakumar V."/>
            <person name="Chan A.P."/>
            <person name="Thibaud-Nissen F."/>
            <person name="Schobel S."/>
            <person name="Town C.D."/>
        </authorList>
    </citation>
    <scope>GENOME REANNOTATION</scope>
    <source>
        <strain>cv. Columbia</strain>
    </source>
</reference>
<reference key="3">
    <citation type="journal article" date="2003" name="Science">
        <title>Empirical analysis of transcriptional activity in the Arabidopsis genome.</title>
        <authorList>
            <person name="Yamada K."/>
            <person name="Lim J."/>
            <person name="Dale J.M."/>
            <person name="Chen H."/>
            <person name="Shinn P."/>
            <person name="Palm C.J."/>
            <person name="Southwick A.M."/>
            <person name="Wu H.C."/>
            <person name="Kim C.J."/>
            <person name="Nguyen M."/>
            <person name="Pham P.K."/>
            <person name="Cheuk R.F."/>
            <person name="Karlin-Newmann G."/>
            <person name="Liu S.X."/>
            <person name="Lam B."/>
            <person name="Sakano H."/>
            <person name="Wu T."/>
            <person name="Yu G."/>
            <person name="Miranda M."/>
            <person name="Quach H.L."/>
            <person name="Tripp M."/>
            <person name="Chang C.H."/>
            <person name="Lee J.M."/>
            <person name="Toriumi M.J."/>
            <person name="Chan M.M."/>
            <person name="Tang C.C."/>
            <person name="Onodera C.S."/>
            <person name="Deng J.M."/>
            <person name="Akiyama K."/>
            <person name="Ansari Y."/>
            <person name="Arakawa T."/>
            <person name="Banh J."/>
            <person name="Banno F."/>
            <person name="Bowser L."/>
            <person name="Brooks S.Y."/>
            <person name="Carninci P."/>
            <person name="Chao Q."/>
            <person name="Choy N."/>
            <person name="Enju A."/>
            <person name="Goldsmith A.D."/>
            <person name="Gurjal M."/>
            <person name="Hansen N.F."/>
            <person name="Hayashizaki Y."/>
            <person name="Johnson-Hopson C."/>
            <person name="Hsuan V.W."/>
            <person name="Iida K."/>
            <person name="Karnes M."/>
            <person name="Khan S."/>
            <person name="Koesema E."/>
            <person name="Ishida J."/>
            <person name="Jiang P.X."/>
            <person name="Jones T."/>
            <person name="Kawai J."/>
            <person name="Kamiya A."/>
            <person name="Meyers C."/>
            <person name="Nakajima M."/>
            <person name="Narusaka M."/>
            <person name="Seki M."/>
            <person name="Sakurai T."/>
            <person name="Satou M."/>
            <person name="Tamse R."/>
            <person name="Vaysberg M."/>
            <person name="Wallender E.K."/>
            <person name="Wong C."/>
            <person name="Yamamura Y."/>
            <person name="Yuan S."/>
            <person name="Shinozaki K."/>
            <person name="Davis R.W."/>
            <person name="Theologis A."/>
            <person name="Ecker J.R."/>
        </authorList>
    </citation>
    <scope>NUCLEOTIDE SEQUENCE [LARGE SCALE MRNA] (ISOFORM 1)</scope>
    <source>
        <strain>cv. Columbia</strain>
    </source>
</reference>
<reference key="4">
    <citation type="submission" date="2006-07" db="EMBL/GenBank/DDBJ databases">
        <title>Large-scale analysis of RIKEN Arabidopsis full-length (RAFL) cDNAs.</title>
        <authorList>
            <person name="Totoki Y."/>
            <person name="Seki M."/>
            <person name="Ishida J."/>
            <person name="Nakajima M."/>
            <person name="Enju A."/>
            <person name="Kamiya A."/>
            <person name="Narusaka M."/>
            <person name="Shin-i T."/>
            <person name="Nakagawa M."/>
            <person name="Sakamoto N."/>
            <person name="Oishi K."/>
            <person name="Kohara Y."/>
            <person name="Kobayashi M."/>
            <person name="Toyoda A."/>
            <person name="Sakaki Y."/>
            <person name="Sakurai T."/>
            <person name="Iida K."/>
            <person name="Akiyama K."/>
            <person name="Satou M."/>
            <person name="Toyoda T."/>
            <person name="Konagaya A."/>
            <person name="Carninci P."/>
            <person name="Kawai J."/>
            <person name="Hayashizaki Y."/>
            <person name="Shinozaki K."/>
        </authorList>
    </citation>
    <scope>NUCLEOTIDE SEQUENCE [LARGE SCALE MRNA] (ISOFORMS 1 AND 3)</scope>
    <source>
        <strain>cv. Columbia</strain>
    </source>
</reference>
<reference key="5">
    <citation type="submission" date="2002-03" db="EMBL/GenBank/DDBJ databases">
        <title>Full-length cDNA from Arabidopsis thaliana.</title>
        <authorList>
            <person name="Brover V.V."/>
            <person name="Troukhan M.E."/>
            <person name="Alexandrov N.A."/>
            <person name="Lu Y.-P."/>
            <person name="Flavell R.B."/>
            <person name="Feldmann K.A."/>
        </authorList>
    </citation>
    <scope>NUCLEOTIDE SEQUENCE [LARGE SCALE MRNA] (ISOFORM 1)</scope>
</reference>
<reference key="6">
    <citation type="journal article" date="2001" name="New Phytol.">
        <title>The CDPK superfamily of protein kinases.</title>
        <authorList>
            <person name="Harmon A.C."/>
            <person name="Gribskov M."/>
            <person name="Gubrium E."/>
            <person name="Harper J.F."/>
        </authorList>
    </citation>
    <scope>GENE FAMILY</scope>
    <scope>NOMENCLATURE</scope>
</reference>
<reference key="7">
    <citation type="journal article" date="2002" name="Plant Physiol.">
        <title>Calcium signaling through protein kinases. The Arabidopsis calcium-dependent protein kinase gene family.</title>
        <authorList>
            <person name="Cheng S.-H."/>
            <person name="Willmann M.R."/>
            <person name="Chen H.-C."/>
            <person name="Sheen J."/>
        </authorList>
    </citation>
    <scope>GENE FAMILY</scope>
    <scope>NOMENCLATURE</scope>
</reference>
<reference key="8">
    <citation type="journal article" date="2003" name="Plant Physiol.">
        <title>The Arabidopsis CDPK-SnRK superfamily of protein kinases.</title>
        <authorList>
            <person name="Hrabak E.M."/>
            <person name="Chan C.W.M."/>
            <person name="Gribskov M."/>
            <person name="Harper J.F."/>
            <person name="Choi J.H."/>
            <person name="Halford N."/>
            <person name="Kudla J."/>
            <person name="Luan S."/>
            <person name="Nimmo H.G."/>
            <person name="Sussman M.R."/>
            <person name="Thomas M."/>
            <person name="Walker-Simmons K."/>
            <person name="Zhu J.-K."/>
            <person name="Harmon A.C."/>
        </authorList>
    </citation>
    <scope>GENE FAMILY</scope>
    <scope>NOMENCLATURE</scope>
</reference>
<reference key="9">
    <citation type="journal article" date="2003" name="Plant Physiol.">
        <title>Subcellular targeting of nine calcium-dependent protein kinase isoforms from Arabidopsis.</title>
        <authorList>
            <person name="Dammann C."/>
            <person name="Ichida A."/>
            <person name="Hong B."/>
            <person name="Romanowsky S.M."/>
            <person name="Hrabak E.M."/>
            <person name="Harmon A.C."/>
            <person name="Pickard B.G."/>
            <person name="Harper J.F."/>
        </authorList>
    </citation>
    <scope>SUBCELLULAR LOCATION</scope>
</reference>
<reference key="10">
    <citation type="journal article" date="2009" name="Plant Physiol.">
        <title>Large-scale Arabidopsis phosphoproteome profiling reveals novel chloroplast kinase substrates and phosphorylation networks.</title>
        <authorList>
            <person name="Reiland S."/>
            <person name="Messerli G."/>
            <person name="Baerenfaller K."/>
            <person name="Gerrits B."/>
            <person name="Endler A."/>
            <person name="Grossmann J."/>
            <person name="Gruissem W."/>
            <person name="Baginsky S."/>
        </authorList>
    </citation>
    <scope>PHOSPHORYLATION [LARGE SCALE ANALYSIS] AT SER-515</scope>
    <scope>IDENTIFICATION BY MASS SPECTROMETRY [LARGE SCALE ANALYSIS]</scope>
</reference>
<reference key="11">
    <citation type="journal article" date="2013" name="Plant J.">
        <title>Function of calcium-dependent protein kinase CPK28 of Arabidopsis thaliana in plant stem elongation and vascular development.</title>
        <authorList>
            <person name="Matschi S."/>
            <person name="Werner S."/>
            <person name="Schulze W.X."/>
            <person name="Legen J."/>
            <person name="Hilger H.H."/>
            <person name="Romeis T."/>
        </authorList>
    </citation>
    <scope>FUNCTION</scope>
    <scope>ACTIVITY REGULATION</scope>
    <scope>PHOSPHORYLATION AT SER-228; SER-318 AND SER-495</scope>
    <scope>TISSUE SPECIFICITY</scope>
    <scope>DISRUPTION PHENOTYPE</scope>
</reference>
<reference key="12">
    <citation type="journal article" date="2014" name="Cell Host Microbe">
        <title>The calcium-dependent protein kinase CPK28 buffers plant immunity and regulates BIK1 turnover.</title>
        <authorList>
            <person name="Monaghan J."/>
            <person name="Matschi S."/>
            <person name="Shorinola O."/>
            <person name="Rovenich H."/>
            <person name="Matei A."/>
            <person name="Segonzac C."/>
            <person name="Malinovsky F.G."/>
            <person name="Rathjen J.P."/>
            <person name="MacLean D."/>
            <person name="Romeis T."/>
            <person name="Zipfel C."/>
        </authorList>
    </citation>
    <scope>FUNCTION</scope>
    <scope>CATALYTIC ACTIVITY</scope>
    <scope>INTERACTION WITH BIK1</scope>
    <scope>MUTAGENESIS OF SER-245 AND ALA-295</scope>
</reference>
<dbReference type="EC" id="2.7.11.1" evidence="9"/>
<dbReference type="EMBL" id="AB011474">
    <property type="protein sequence ID" value="BAB10426.1"/>
    <property type="molecule type" value="Genomic_DNA"/>
</dbReference>
<dbReference type="EMBL" id="CP002688">
    <property type="protein sequence ID" value="AED98177.1"/>
    <property type="molecule type" value="Genomic_DNA"/>
</dbReference>
<dbReference type="EMBL" id="CP002688">
    <property type="protein sequence ID" value="AED98178.1"/>
    <property type="molecule type" value="Genomic_DNA"/>
</dbReference>
<dbReference type="EMBL" id="CP002688">
    <property type="protein sequence ID" value="AED98179.1"/>
    <property type="molecule type" value="Genomic_DNA"/>
</dbReference>
<dbReference type="EMBL" id="CP002688">
    <property type="protein sequence ID" value="AED98180.1"/>
    <property type="molecule type" value="Genomic_DNA"/>
</dbReference>
<dbReference type="EMBL" id="CP002688">
    <property type="protein sequence ID" value="ANM69530.1"/>
    <property type="molecule type" value="Genomic_DNA"/>
</dbReference>
<dbReference type="EMBL" id="AY139991">
    <property type="protein sequence ID" value="AAM98133.1"/>
    <property type="molecule type" value="mRNA"/>
</dbReference>
<dbReference type="EMBL" id="BT010380">
    <property type="protein sequence ID" value="AAQ56823.1"/>
    <property type="molecule type" value="mRNA"/>
</dbReference>
<dbReference type="EMBL" id="AK227052">
    <property type="protein sequence ID" value="BAE99112.1"/>
    <property type="molecule type" value="mRNA"/>
</dbReference>
<dbReference type="EMBL" id="AK229317">
    <property type="protein sequence ID" value="BAF01180.1"/>
    <property type="molecule type" value="mRNA"/>
</dbReference>
<dbReference type="EMBL" id="AY085837">
    <property type="protein sequence ID" value="AAM63052.1"/>
    <property type="molecule type" value="mRNA"/>
</dbReference>
<dbReference type="RefSeq" id="NP_001078806.1">
    <molecule id="Q9FKW4-2"/>
    <property type="nucleotide sequence ID" value="NM_001085337.1"/>
</dbReference>
<dbReference type="RefSeq" id="NP_001119508.1">
    <molecule id="Q9FKW4-3"/>
    <property type="nucleotide sequence ID" value="NM_001126036.2"/>
</dbReference>
<dbReference type="RefSeq" id="NP_001331200.1">
    <molecule id="Q9FKW4-3"/>
    <property type="nucleotide sequence ID" value="NM_001345752.1"/>
</dbReference>
<dbReference type="RefSeq" id="NP_201422.1">
    <molecule id="Q9FKW4-1"/>
    <property type="nucleotide sequence ID" value="NM_126019.4"/>
</dbReference>
<dbReference type="RefSeq" id="NP_851280.1">
    <molecule id="Q9FKW4-1"/>
    <property type="nucleotide sequence ID" value="NM_180949.3"/>
</dbReference>
<dbReference type="SMR" id="Q9FKW4"/>
<dbReference type="FunCoup" id="Q9FKW4">
    <property type="interactions" value="380"/>
</dbReference>
<dbReference type="STRING" id="3702.Q9FKW4"/>
<dbReference type="iPTMnet" id="Q9FKW4"/>
<dbReference type="SwissPalm" id="Q9FKW4"/>
<dbReference type="PaxDb" id="3702-AT5G66210.1"/>
<dbReference type="ProteomicsDB" id="224395">
    <molecule id="Q9FKW4-1"/>
</dbReference>
<dbReference type="EnsemblPlants" id="AT5G66210.1">
    <molecule id="Q9FKW4-1"/>
    <property type="protein sequence ID" value="AT5G66210.1"/>
    <property type="gene ID" value="AT5G66210"/>
</dbReference>
<dbReference type="EnsemblPlants" id="AT5G66210.2">
    <molecule id="Q9FKW4-1"/>
    <property type="protein sequence ID" value="AT5G66210.2"/>
    <property type="gene ID" value="AT5G66210"/>
</dbReference>
<dbReference type="EnsemblPlants" id="AT5G66210.3">
    <molecule id="Q9FKW4-2"/>
    <property type="protein sequence ID" value="AT5G66210.3"/>
    <property type="gene ID" value="AT5G66210"/>
</dbReference>
<dbReference type="EnsemblPlants" id="AT5G66210.4">
    <molecule id="Q9FKW4-3"/>
    <property type="protein sequence ID" value="AT5G66210.4"/>
    <property type="gene ID" value="AT5G66210"/>
</dbReference>
<dbReference type="EnsemblPlants" id="AT5G66210.6">
    <molecule id="Q9FKW4-3"/>
    <property type="protein sequence ID" value="AT5G66210.6"/>
    <property type="gene ID" value="AT5G66210"/>
</dbReference>
<dbReference type="GeneID" id="836753"/>
<dbReference type="Gramene" id="AT5G66210.1">
    <molecule id="Q9FKW4-1"/>
    <property type="protein sequence ID" value="AT5G66210.1"/>
    <property type="gene ID" value="AT5G66210"/>
</dbReference>
<dbReference type="Gramene" id="AT5G66210.2">
    <molecule id="Q9FKW4-1"/>
    <property type="protein sequence ID" value="AT5G66210.2"/>
    <property type="gene ID" value="AT5G66210"/>
</dbReference>
<dbReference type="Gramene" id="AT5G66210.3">
    <molecule id="Q9FKW4-2"/>
    <property type="protein sequence ID" value="AT5G66210.3"/>
    <property type="gene ID" value="AT5G66210"/>
</dbReference>
<dbReference type="Gramene" id="AT5G66210.4">
    <molecule id="Q9FKW4-3"/>
    <property type="protein sequence ID" value="AT5G66210.4"/>
    <property type="gene ID" value="AT5G66210"/>
</dbReference>
<dbReference type="Gramene" id="AT5G66210.6">
    <molecule id="Q9FKW4-3"/>
    <property type="protein sequence ID" value="AT5G66210.6"/>
    <property type="gene ID" value="AT5G66210"/>
</dbReference>
<dbReference type="KEGG" id="ath:AT5G66210"/>
<dbReference type="Araport" id="AT5G66210"/>
<dbReference type="TAIR" id="AT5G66210">
    <property type="gene designation" value="CPK28"/>
</dbReference>
<dbReference type="eggNOG" id="KOG0032">
    <property type="taxonomic scope" value="Eukaryota"/>
</dbReference>
<dbReference type="HOGENOM" id="CLU_000288_37_2_1"/>
<dbReference type="InParanoid" id="Q9FKW4"/>
<dbReference type="OMA" id="CYSATKV"/>
<dbReference type="OrthoDB" id="40902at2759"/>
<dbReference type="PhylomeDB" id="Q9FKW4"/>
<dbReference type="PRO" id="PR:Q9FKW4"/>
<dbReference type="Proteomes" id="UP000006548">
    <property type="component" value="Chromosome 5"/>
</dbReference>
<dbReference type="ExpressionAtlas" id="Q9FKW4">
    <property type="expression patterns" value="baseline and differential"/>
</dbReference>
<dbReference type="GO" id="GO:0005886">
    <property type="term" value="C:plasma membrane"/>
    <property type="evidence" value="ECO:0007669"/>
    <property type="project" value="UniProtKB-SubCell"/>
</dbReference>
<dbReference type="GO" id="GO:0005524">
    <property type="term" value="F:ATP binding"/>
    <property type="evidence" value="ECO:0007669"/>
    <property type="project" value="UniProtKB-KW"/>
</dbReference>
<dbReference type="GO" id="GO:0005509">
    <property type="term" value="F:calcium ion binding"/>
    <property type="evidence" value="ECO:0007669"/>
    <property type="project" value="InterPro"/>
</dbReference>
<dbReference type="GO" id="GO:0106310">
    <property type="term" value="F:protein serine kinase activity"/>
    <property type="evidence" value="ECO:0007669"/>
    <property type="project" value="RHEA"/>
</dbReference>
<dbReference type="GO" id="GO:0004674">
    <property type="term" value="F:protein serine/threonine kinase activity"/>
    <property type="evidence" value="ECO:0000314"/>
    <property type="project" value="UniProtKB"/>
</dbReference>
<dbReference type="GO" id="GO:0004722">
    <property type="term" value="F:protein serine/threonine phosphatase activity"/>
    <property type="evidence" value="ECO:0000314"/>
    <property type="project" value="TAIR"/>
</dbReference>
<dbReference type="GO" id="GO:0006952">
    <property type="term" value="P:defense response"/>
    <property type="evidence" value="ECO:0007669"/>
    <property type="project" value="UniProtKB-KW"/>
</dbReference>
<dbReference type="GO" id="GO:1900425">
    <property type="term" value="P:negative regulation of defense response to bacterium"/>
    <property type="evidence" value="ECO:0000314"/>
    <property type="project" value="UniProtKB"/>
</dbReference>
<dbReference type="GO" id="GO:0006468">
    <property type="term" value="P:protein phosphorylation"/>
    <property type="evidence" value="ECO:0000314"/>
    <property type="project" value="TAIR"/>
</dbReference>
<dbReference type="GO" id="GO:2000032">
    <property type="term" value="P:regulation of secondary shoot formation"/>
    <property type="evidence" value="ECO:0000315"/>
    <property type="project" value="UniProtKB"/>
</dbReference>
<dbReference type="CDD" id="cd05117">
    <property type="entry name" value="STKc_CAMK"/>
    <property type="match status" value="1"/>
</dbReference>
<dbReference type="FunFam" id="1.10.238.10:FF:000158">
    <property type="entry name" value="Calcium-dependent protein kinase 28"/>
    <property type="match status" value="1"/>
</dbReference>
<dbReference type="FunFam" id="1.10.510.10:FF:000225">
    <property type="entry name" value="calcium-dependent protein kinase 28-like"/>
    <property type="match status" value="1"/>
</dbReference>
<dbReference type="FunFam" id="3.30.200.20:FF:000101">
    <property type="entry name" value="CDPK-related kinase 1"/>
    <property type="match status" value="1"/>
</dbReference>
<dbReference type="Gene3D" id="1.10.238.10">
    <property type="entry name" value="EF-hand"/>
    <property type="match status" value="2"/>
</dbReference>
<dbReference type="Gene3D" id="3.30.200.20">
    <property type="entry name" value="Phosphorylase Kinase, domain 1"/>
    <property type="match status" value="1"/>
</dbReference>
<dbReference type="Gene3D" id="1.10.510.10">
    <property type="entry name" value="Transferase(Phosphotransferase) domain 1"/>
    <property type="match status" value="1"/>
</dbReference>
<dbReference type="InterPro" id="IPR050205">
    <property type="entry name" value="CDPK_Ser/Thr_kinases"/>
</dbReference>
<dbReference type="InterPro" id="IPR011992">
    <property type="entry name" value="EF-hand-dom_pair"/>
</dbReference>
<dbReference type="InterPro" id="IPR018247">
    <property type="entry name" value="EF_Hand_1_Ca_BS"/>
</dbReference>
<dbReference type="InterPro" id="IPR002048">
    <property type="entry name" value="EF_hand_dom"/>
</dbReference>
<dbReference type="InterPro" id="IPR011009">
    <property type="entry name" value="Kinase-like_dom_sf"/>
</dbReference>
<dbReference type="InterPro" id="IPR000719">
    <property type="entry name" value="Prot_kinase_dom"/>
</dbReference>
<dbReference type="InterPro" id="IPR017441">
    <property type="entry name" value="Protein_kinase_ATP_BS"/>
</dbReference>
<dbReference type="InterPro" id="IPR008271">
    <property type="entry name" value="Ser/Thr_kinase_AS"/>
</dbReference>
<dbReference type="PANTHER" id="PTHR24349">
    <property type="entry name" value="SERINE/THREONINE-PROTEIN KINASE"/>
    <property type="match status" value="1"/>
</dbReference>
<dbReference type="Pfam" id="PF13499">
    <property type="entry name" value="EF-hand_7"/>
    <property type="match status" value="2"/>
</dbReference>
<dbReference type="Pfam" id="PF00069">
    <property type="entry name" value="Pkinase"/>
    <property type="match status" value="1"/>
</dbReference>
<dbReference type="SMART" id="SM00054">
    <property type="entry name" value="EFh"/>
    <property type="match status" value="4"/>
</dbReference>
<dbReference type="SMART" id="SM00220">
    <property type="entry name" value="S_TKc"/>
    <property type="match status" value="1"/>
</dbReference>
<dbReference type="SUPFAM" id="SSF47473">
    <property type="entry name" value="EF-hand"/>
    <property type="match status" value="1"/>
</dbReference>
<dbReference type="SUPFAM" id="SSF56112">
    <property type="entry name" value="Protein kinase-like (PK-like)"/>
    <property type="match status" value="1"/>
</dbReference>
<dbReference type="PROSITE" id="PS00018">
    <property type="entry name" value="EF_HAND_1"/>
    <property type="match status" value="4"/>
</dbReference>
<dbReference type="PROSITE" id="PS50222">
    <property type="entry name" value="EF_HAND_2"/>
    <property type="match status" value="4"/>
</dbReference>
<dbReference type="PROSITE" id="PS00107">
    <property type="entry name" value="PROTEIN_KINASE_ATP"/>
    <property type="match status" value="1"/>
</dbReference>
<dbReference type="PROSITE" id="PS50011">
    <property type="entry name" value="PROTEIN_KINASE_DOM"/>
    <property type="match status" value="1"/>
</dbReference>
<dbReference type="PROSITE" id="PS00108">
    <property type="entry name" value="PROTEIN_KINASE_ST"/>
    <property type="match status" value="1"/>
</dbReference>
<comment type="function">
    <text evidence="8 9 13">May play a role in signal transduction pathways that involve calcium as a second messenger (Probable). Acts as a developmentally controlled regulator for coordinated stem elongation and vascular development. Acts as a key component which contributes to the developmental switch that establishes the transition from vegetative to reproductive growth (PubMed:23252373). Involved in pathogen-associated molecular pattern (PAMP)-triggered immunity (PTI) signaling. Interacts with and phosphorylates the kinase BIK1, a central rate-limiting kinase in PTI signaling. Facilitates BIK1 turnover and negatively regulates BIK1-mediated immune responses triggered by several PAMPs. Its kinase activity is necessary and sufficient for its function in PTI signaling (PubMed:25525792).</text>
</comment>
<comment type="catalytic activity">
    <reaction evidence="9">
        <text>L-seryl-[protein] + ATP = O-phospho-L-seryl-[protein] + ADP + H(+)</text>
        <dbReference type="Rhea" id="RHEA:17989"/>
        <dbReference type="Rhea" id="RHEA-COMP:9863"/>
        <dbReference type="Rhea" id="RHEA-COMP:11604"/>
        <dbReference type="ChEBI" id="CHEBI:15378"/>
        <dbReference type="ChEBI" id="CHEBI:29999"/>
        <dbReference type="ChEBI" id="CHEBI:30616"/>
        <dbReference type="ChEBI" id="CHEBI:83421"/>
        <dbReference type="ChEBI" id="CHEBI:456216"/>
        <dbReference type="EC" id="2.7.11.1"/>
    </reaction>
</comment>
<comment type="catalytic activity">
    <reaction evidence="9">
        <text>L-threonyl-[protein] + ATP = O-phospho-L-threonyl-[protein] + ADP + H(+)</text>
        <dbReference type="Rhea" id="RHEA:46608"/>
        <dbReference type="Rhea" id="RHEA-COMP:11060"/>
        <dbReference type="Rhea" id="RHEA-COMP:11605"/>
        <dbReference type="ChEBI" id="CHEBI:15378"/>
        <dbReference type="ChEBI" id="CHEBI:30013"/>
        <dbReference type="ChEBI" id="CHEBI:30616"/>
        <dbReference type="ChEBI" id="CHEBI:61977"/>
        <dbReference type="ChEBI" id="CHEBI:456216"/>
        <dbReference type="EC" id="2.7.11.1"/>
    </reaction>
</comment>
<comment type="activity regulation">
    <text evidence="8">Activated by calcium (PubMed:23252373). Autophosphorylation plays an important role in the regulation of the kinase activity (PubMed:23252373).</text>
</comment>
<comment type="subunit">
    <text evidence="9">Interacts with BIK1.</text>
</comment>
<comment type="subcellular location">
    <subcellularLocation>
        <location evidence="7">Cell membrane</location>
        <topology evidence="7">Lipid-anchor</topology>
    </subcellularLocation>
</comment>
<comment type="alternative products">
    <event type="alternative splicing"/>
    <isoform>
        <id>Q9FKW4-1</id>
        <name>1</name>
        <sequence type="displayed"/>
    </isoform>
    <isoform>
        <id>Q9FKW4-2</id>
        <name>2</name>
        <sequence type="described" ref="VSP_036294 VSP_036295"/>
    </isoform>
    <isoform>
        <id>Q9FKW4-3</id>
        <name>3</name>
        <sequence type="described" ref="VSP_036292 VSP_036293"/>
    </isoform>
</comment>
<comment type="tissue specificity">
    <text evidence="8">Expressed in vascular and meristematic tissues throughout plant development.</text>
</comment>
<comment type="domain">
    <text evidence="1">There are 3 contiguous domains conserved in the CDPK subfamily: a kinase domain, an autoinhibitory (junction) domain and a calmodulin-like domain. The autoinhibitory domain (328-358) inactivates kinase activity under calcium-free conditions (By similarity).</text>
</comment>
<comment type="disruption phenotype">
    <text evidence="8">Severe growth defect in shoot elongation. Severe growth defect of flowering stem.</text>
</comment>
<comment type="miscellaneous">
    <molecule>Isoform 3</molecule>
    <text evidence="12">May be due to an intron retention.</text>
</comment>
<comment type="similarity">
    <text evidence="3">Belongs to the protein kinase superfamily. Ser/Thr protein kinase family. CDPK subfamily.</text>
</comment>
<gene>
    <name evidence="11" type="primary">CPK28</name>
    <name type="ordered locus">At5g66210</name>
    <name type="ORF">K2A18.29</name>
</gene>
<keyword id="KW-0025">Alternative splicing</keyword>
<keyword id="KW-0067">ATP-binding</keyword>
<keyword id="KW-0106">Calcium</keyword>
<keyword id="KW-1003">Cell membrane</keyword>
<keyword id="KW-0217">Developmental protein</keyword>
<keyword id="KW-0341">Growth regulation</keyword>
<keyword id="KW-0418">Kinase</keyword>
<keyword id="KW-0449">Lipoprotein</keyword>
<keyword id="KW-0472">Membrane</keyword>
<keyword id="KW-0479">Metal-binding</keyword>
<keyword id="KW-0519">Myristate</keyword>
<keyword id="KW-0547">Nucleotide-binding</keyword>
<keyword id="KW-0564">Palmitate</keyword>
<keyword id="KW-0597">Phosphoprotein</keyword>
<keyword id="KW-0611">Plant defense</keyword>
<keyword id="KW-1185">Reference proteome</keyword>
<keyword id="KW-0677">Repeat</keyword>
<keyword id="KW-0723">Serine/threonine-protein kinase</keyword>
<keyword id="KW-0808">Transferase</keyword>
<feature type="initiator methionine" description="Removed" evidence="12">
    <location>
        <position position="1"/>
    </location>
</feature>
<feature type="chain" id="PRO_0000363350" description="Calcium-dependent protein kinase 28">
    <location>
        <begin position="2"/>
        <end position="523"/>
    </location>
</feature>
<feature type="domain" description="Protein kinase" evidence="3">
    <location>
        <begin position="62"/>
        <end position="322"/>
    </location>
</feature>
<feature type="domain" description="EF-hand 1" evidence="4">
    <location>
        <begin position="365"/>
        <end position="400"/>
    </location>
</feature>
<feature type="domain" description="EF-hand 2" evidence="4">
    <location>
        <begin position="402"/>
        <end position="437"/>
    </location>
</feature>
<feature type="domain" description="EF-hand 3" evidence="4">
    <location>
        <begin position="444"/>
        <end position="479"/>
    </location>
</feature>
<feature type="domain" description="EF-hand 4" evidence="4">
    <location>
        <begin position="482"/>
        <end position="509"/>
    </location>
</feature>
<feature type="region of interest" description="Disordered" evidence="6">
    <location>
        <begin position="15"/>
        <end position="43"/>
    </location>
</feature>
<feature type="region of interest" description="Autoinhibitory domain" evidence="1">
    <location>
        <begin position="328"/>
        <end position="358"/>
    </location>
</feature>
<feature type="active site" description="Proton acceptor" evidence="3 5">
    <location>
        <position position="188"/>
    </location>
</feature>
<feature type="binding site" evidence="3">
    <location>
        <begin position="68"/>
        <end position="76"/>
    </location>
    <ligand>
        <name>ATP</name>
        <dbReference type="ChEBI" id="CHEBI:30616"/>
    </ligand>
</feature>
<feature type="binding site" evidence="3">
    <location>
        <position position="91"/>
    </location>
    <ligand>
        <name>ATP</name>
        <dbReference type="ChEBI" id="CHEBI:30616"/>
    </ligand>
</feature>
<feature type="binding site" evidence="4">
    <location>
        <position position="378"/>
    </location>
    <ligand>
        <name>Ca(2+)</name>
        <dbReference type="ChEBI" id="CHEBI:29108"/>
        <label>1</label>
    </ligand>
</feature>
<feature type="binding site" evidence="4">
    <location>
        <position position="380"/>
    </location>
    <ligand>
        <name>Ca(2+)</name>
        <dbReference type="ChEBI" id="CHEBI:29108"/>
        <label>1</label>
    </ligand>
</feature>
<feature type="binding site" evidence="4">
    <location>
        <position position="382"/>
    </location>
    <ligand>
        <name>Ca(2+)</name>
        <dbReference type="ChEBI" id="CHEBI:29108"/>
        <label>1</label>
    </ligand>
</feature>
<feature type="binding site" evidence="4">
    <location>
        <position position="389"/>
    </location>
    <ligand>
        <name>Ca(2+)</name>
        <dbReference type="ChEBI" id="CHEBI:29108"/>
        <label>1</label>
    </ligand>
</feature>
<feature type="binding site" evidence="4">
    <location>
        <position position="415"/>
    </location>
    <ligand>
        <name>Ca(2+)</name>
        <dbReference type="ChEBI" id="CHEBI:29108"/>
        <label>2</label>
    </ligand>
</feature>
<feature type="binding site" evidence="4">
    <location>
        <position position="417"/>
    </location>
    <ligand>
        <name>Ca(2+)</name>
        <dbReference type="ChEBI" id="CHEBI:29108"/>
        <label>2</label>
    </ligand>
</feature>
<feature type="binding site" evidence="4">
    <location>
        <position position="419"/>
    </location>
    <ligand>
        <name>Ca(2+)</name>
        <dbReference type="ChEBI" id="CHEBI:29108"/>
        <label>2</label>
    </ligand>
</feature>
<feature type="binding site" evidence="4">
    <location>
        <position position="426"/>
    </location>
    <ligand>
        <name>Ca(2+)</name>
        <dbReference type="ChEBI" id="CHEBI:29108"/>
        <label>2</label>
    </ligand>
</feature>
<feature type="binding site" evidence="4">
    <location>
        <position position="457"/>
    </location>
    <ligand>
        <name>Ca(2+)</name>
        <dbReference type="ChEBI" id="CHEBI:29108"/>
        <label>3</label>
    </ligand>
</feature>
<feature type="binding site" evidence="4">
    <location>
        <position position="459"/>
    </location>
    <ligand>
        <name>Ca(2+)</name>
        <dbReference type="ChEBI" id="CHEBI:29108"/>
        <label>3</label>
    </ligand>
</feature>
<feature type="binding site" evidence="4">
    <location>
        <position position="461"/>
    </location>
    <ligand>
        <name>Ca(2+)</name>
        <dbReference type="ChEBI" id="CHEBI:29108"/>
        <label>3</label>
    </ligand>
</feature>
<feature type="binding site" evidence="4">
    <location>
        <position position="463"/>
    </location>
    <ligand>
        <name>Ca(2+)</name>
        <dbReference type="ChEBI" id="CHEBI:29108"/>
        <label>3</label>
    </ligand>
</feature>
<feature type="binding site" evidence="4">
    <location>
        <position position="468"/>
    </location>
    <ligand>
        <name>Ca(2+)</name>
        <dbReference type="ChEBI" id="CHEBI:29108"/>
        <label>3</label>
    </ligand>
</feature>
<feature type="binding site" evidence="4">
    <location>
        <position position="487"/>
    </location>
    <ligand>
        <name>Ca(2+)</name>
        <dbReference type="ChEBI" id="CHEBI:29108"/>
        <label>4</label>
    </ligand>
</feature>
<feature type="binding site" evidence="4">
    <location>
        <position position="489"/>
    </location>
    <ligand>
        <name>Ca(2+)</name>
        <dbReference type="ChEBI" id="CHEBI:29108"/>
        <label>4</label>
    </ligand>
</feature>
<feature type="binding site" evidence="4">
    <location>
        <position position="491"/>
    </location>
    <ligand>
        <name>Ca(2+)</name>
        <dbReference type="ChEBI" id="CHEBI:29108"/>
        <label>4</label>
    </ligand>
</feature>
<feature type="binding site" evidence="4">
    <location>
        <position position="493"/>
    </location>
    <ligand>
        <name>Ca(2+)</name>
        <dbReference type="ChEBI" id="CHEBI:29108"/>
        <label>4</label>
    </ligand>
</feature>
<feature type="binding site" evidence="4">
    <location>
        <position position="498"/>
    </location>
    <ligand>
        <name>Ca(2+)</name>
        <dbReference type="ChEBI" id="CHEBI:29108"/>
        <label>4</label>
    </ligand>
</feature>
<feature type="modified residue" description="Phosphoserine" evidence="8">
    <location>
        <position position="228"/>
    </location>
</feature>
<feature type="modified residue" description="Phosphoserine" evidence="8">
    <location>
        <position position="318"/>
    </location>
</feature>
<feature type="modified residue" description="Phosphoserine" evidence="8">
    <location>
        <position position="495"/>
    </location>
</feature>
<feature type="modified residue" description="Phosphoserine" evidence="14">
    <location>
        <position position="515"/>
    </location>
</feature>
<feature type="lipid moiety-binding region" description="N-myristoyl glycine" evidence="2">
    <location>
        <position position="2"/>
    </location>
</feature>
<feature type="lipid moiety-binding region" description="S-palmitoyl cysteine" evidence="2">
    <location>
        <position position="4"/>
    </location>
</feature>
<feature type="splice variant" id="VSP_036292" description="In isoform 3." evidence="10">
    <original>IDSNTDGLVDFTEFVAAALHVH</original>
    <variation>VVIFLFSIAIASLGVSEGDVVS</variation>
    <location>
        <begin position="414"/>
        <end position="435"/>
    </location>
</feature>
<feature type="splice variant" id="VSP_036293" description="In isoform 3." evidence="10">
    <location>
        <begin position="436"/>
        <end position="523"/>
    </location>
</feature>
<feature type="splice variant" id="VSP_036294" description="In isoform 2." evidence="12">
    <original>HTGLRGSIDPLLDEADI</original>
    <variation>AQQNKERKWSENPIDEI</variation>
    <location>
        <begin position="472"/>
        <end position="488"/>
    </location>
</feature>
<feature type="splice variant" id="VSP_036295" description="In isoform 2." evidence="12">
    <location>
        <begin position="489"/>
        <end position="523"/>
    </location>
</feature>
<feature type="mutagenesis site" description="Abolishes kinase activity." evidence="9">
    <original>D</original>
    <variation>A</variation>
    <location>
        <position position="188"/>
    </location>
</feature>
<feature type="mutagenesis site" description="In mod1; abolishes kinase activity; when associated with V-295." evidence="9">
    <original>S</original>
    <variation>L</variation>
    <location>
        <position position="245"/>
    </location>
</feature>
<feature type="mutagenesis site" description="In mod1; abolishes kinase activity; when associated with L-245." evidence="9">
    <original>A</original>
    <variation>V</variation>
    <location>
        <position position="295"/>
    </location>
</feature>
<feature type="sequence conflict" description="In Ref. 4; BAF01180." evidence="12" ref="4">
    <original>K</original>
    <variation>E</variation>
    <location>
        <position position="34"/>
    </location>
</feature>
<feature type="sequence conflict" description="In Ref. 5; AAM63052." evidence="12" ref="5">
    <original>G</original>
    <variation>D</variation>
    <location>
        <position position="183"/>
    </location>
</feature>
<sequence>MGVCFSAIRVTGASSSRRSSQTKSKAAPTPIDTKASTKRRTGSIPCGKRTDFGYSKDFHDHYTIGKLLGHGQFGYTYVAIHRPNGDRVAVKRLDKSKMVLPIAVEDVKREVQILIALSGHENVVQFHNAFEDDDYVYIVMELCEGGELLDRILSKKGNRYSEKDAAVVVRQMLKVAGECHLHGLVHRDMKPENFLFKSAQLDSPLKATDFGLSDFIKPGKRFHDIVGSAYYVAPEVLKRRSGPESDVWSIGVITYILLCGRRPFWDRTEDGIFKEVLRNKPDFSRKPWATISDSAKDFVKKLLVKDPRARLTAAQALSHAWVREGGNATDIPVDISVLNNLRQFVRYSRLKQFALRALASTLDEAEISDLRDQFDAIDVDKNGVISLEEMRQALAKDLPWKLKDSRVAEILEAIDSNTDGLVDFTEFVAAALHVHQLEEHDSEKWQLRSRAAFEKFDLDKDGYITPEELRMHTGLRGSIDPLLDEADIDRDGKISLHEFRRLLRTASISSQRAPSPAGHRNLR</sequence>
<evidence type="ECO:0000250" key="1"/>
<evidence type="ECO:0000250" key="2">
    <source>
        <dbReference type="UniProtKB" id="Q9FE20"/>
    </source>
</evidence>
<evidence type="ECO:0000255" key="3">
    <source>
        <dbReference type="PROSITE-ProRule" id="PRU00159"/>
    </source>
</evidence>
<evidence type="ECO:0000255" key="4">
    <source>
        <dbReference type="PROSITE-ProRule" id="PRU00448"/>
    </source>
</evidence>
<evidence type="ECO:0000255" key="5">
    <source>
        <dbReference type="PROSITE-ProRule" id="PRU10027"/>
    </source>
</evidence>
<evidence type="ECO:0000256" key="6">
    <source>
        <dbReference type="SAM" id="MobiDB-lite"/>
    </source>
</evidence>
<evidence type="ECO:0000269" key="7">
    <source>
    </source>
</evidence>
<evidence type="ECO:0000269" key="8">
    <source>
    </source>
</evidence>
<evidence type="ECO:0000269" key="9">
    <source>
    </source>
</evidence>
<evidence type="ECO:0000303" key="10">
    <source ref="4"/>
</evidence>
<evidence type="ECO:0000303" key="11">
    <source ref="6"/>
</evidence>
<evidence type="ECO:0000305" key="12"/>
<evidence type="ECO:0000305" key="13">
    <source>
    </source>
</evidence>
<evidence type="ECO:0007744" key="14">
    <source>
    </source>
</evidence>
<organism>
    <name type="scientific">Arabidopsis thaliana</name>
    <name type="common">Mouse-ear cress</name>
    <dbReference type="NCBI Taxonomy" id="3702"/>
    <lineage>
        <taxon>Eukaryota</taxon>
        <taxon>Viridiplantae</taxon>
        <taxon>Streptophyta</taxon>
        <taxon>Embryophyta</taxon>
        <taxon>Tracheophyta</taxon>
        <taxon>Spermatophyta</taxon>
        <taxon>Magnoliopsida</taxon>
        <taxon>eudicotyledons</taxon>
        <taxon>Gunneridae</taxon>
        <taxon>Pentapetalae</taxon>
        <taxon>rosids</taxon>
        <taxon>malvids</taxon>
        <taxon>Brassicales</taxon>
        <taxon>Brassicaceae</taxon>
        <taxon>Camelineae</taxon>
        <taxon>Arabidopsis</taxon>
    </lineage>
</organism>
<accession>Q9FKW4</accession>
<accession>A8MQP5</accession>
<accession>Q0WNW9</accession>
<accession>Q8LDS1</accession>